<sequence length="758" mass="85652">MTILNHTLGFPRVGLKRELKKAQESYWAGNSTQEELLNVGRELRARHWQQQQQAGVDLVPVGDFAWYDHVLTTSLLLGNVPERHQNADGSIDIDTLFRIGRGRAPTGKPAAAAEMTKWFNTNYHYMVPEFQQGQQFKLGWTQLLDEVDEALALGHKIKPVLLGPITYLWLGKVKGEQFDRLSLLNDILPVYQQVLAELAKRGIEWVQIDEPALVLELPQEWLDAYQPAYQALQGQVKLLLTTYFDSIGHNIDTIRALPVQGLHVDVVAGHDDLAVLNKNLPKEWLLSLGVINGRNVWRADLSSWFERLQPLVNSRPLWLGSSCSLLHSPIDLNEETRLDAEVKSWFAFALQKCAELALLTQALNAPNDAKLAELAAYSAPIRARRSSSRVHNAQVEQRLAAITSQDIERQLPYEARAETQRKRFNLPAWPTTTIGSFPQTTEIRGLRLDFKQGRLDGKNYRTGISEHIKQAIAEQERLGLDVLVHGEAERNDMVEYFGEHLDGFVFTQNGWVQSYGSRCVKPPVIIGDISRPEAITVEWAKYAQSLTEKPVKGMLTGPVTILCWSFPREDVSRETIAKQIALALRDEVEDLEKAGIGIIQIDEPALREGLPLRRADWQAYLQWAVDAFKLNAAVAQNDTQIHTHMCYCEFNDIMDSIAALDADVITIETSRSDMELLESFEDFAYPNEIGPGVYDIHSPNVPSVEWIEALLRKAAQRIPAERLWVNPDCGLKTRGWPETRQALANMVLAAQRLREEQI</sequence>
<comment type="function">
    <text evidence="1">Catalyzes the transfer of a methyl group from 5-methyltetrahydrofolate to homocysteine resulting in methionine formation.</text>
</comment>
<comment type="catalytic activity">
    <reaction evidence="1">
        <text>5-methyltetrahydropteroyltri-L-glutamate + L-homocysteine = tetrahydropteroyltri-L-glutamate + L-methionine</text>
        <dbReference type="Rhea" id="RHEA:21196"/>
        <dbReference type="ChEBI" id="CHEBI:57844"/>
        <dbReference type="ChEBI" id="CHEBI:58140"/>
        <dbReference type="ChEBI" id="CHEBI:58199"/>
        <dbReference type="ChEBI" id="CHEBI:58207"/>
        <dbReference type="EC" id="2.1.1.14"/>
    </reaction>
</comment>
<comment type="cofactor">
    <cofactor evidence="1">
        <name>Zn(2+)</name>
        <dbReference type="ChEBI" id="CHEBI:29105"/>
    </cofactor>
    <text evidence="1">Binds 1 zinc ion per subunit.</text>
</comment>
<comment type="pathway">
    <text evidence="1">Amino-acid biosynthesis; L-methionine biosynthesis via de novo pathway; L-methionine from L-homocysteine (MetE route): step 1/1.</text>
</comment>
<comment type="similarity">
    <text evidence="1">Belongs to the vitamin-B12 independent methionine synthase family.</text>
</comment>
<organism>
    <name type="scientific">Yersinia pseudotuberculosis serotype I (strain IP32953)</name>
    <dbReference type="NCBI Taxonomy" id="273123"/>
    <lineage>
        <taxon>Bacteria</taxon>
        <taxon>Pseudomonadati</taxon>
        <taxon>Pseudomonadota</taxon>
        <taxon>Gammaproteobacteria</taxon>
        <taxon>Enterobacterales</taxon>
        <taxon>Yersiniaceae</taxon>
        <taxon>Yersinia</taxon>
    </lineage>
</organism>
<accession>Q66FT7</accession>
<evidence type="ECO:0000255" key="1">
    <source>
        <dbReference type="HAMAP-Rule" id="MF_00172"/>
    </source>
</evidence>
<feature type="chain" id="PRO_1000017297" description="5-methyltetrahydropteroyltriglutamate--homocysteine methyltransferase">
    <location>
        <begin position="1"/>
        <end position="758"/>
    </location>
</feature>
<feature type="active site" description="Proton donor" evidence="1">
    <location>
        <position position="697"/>
    </location>
</feature>
<feature type="binding site" evidence="1">
    <location>
        <begin position="17"/>
        <end position="20"/>
    </location>
    <ligand>
        <name>5-methyltetrahydropteroyltri-L-glutamate</name>
        <dbReference type="ChEBI" id="CHEBI:58207"/>
    </ligand>
</feature>
<feature type="binding site" evidence="1">
    <location>
        <position position="117"/>
    </location>
    <ligand>
        <name>5-methyltetrahydropteroyltri-L-glutamate</name>
        <dbReference type="ChEBI" id="CHEBI:58207"/>
    </ligand>
</feature>
<feature type="binding site" evidence="1">
    <location>
        <begin position="434"/>
        <end position="436"/>
    </location>
    <ligand>
        <name>L-homocysteine</name>
        <dbReference type="ChEBI" id="CHEBI:58199"/>
    </ligand>
</feature>
<feature type="binding site" evidence="1">
    <location>
        <begin position="434"/>
        <end position="436"/>
    </location>
    <ligand>
        <name>L-methionine</name>
        <dbReference type="ChEBI" id="CHEBI:57844"/>
    </ligand>
</feature>
<feature type="binding site" evidence="1">
    <location>
        <position position="487"/>
    </location>
    <ligand>
        <name>L-homocysteine</name>
        <dbReference type="ChEBI" id="CHEBI:58199"/>
    </ligand>
</feature>
<feature type="binding site" evidence="1">
    <location>
        <position position="487"/>
    </location>
    <ligand>
        <name>L-methionine</name>
        <dbReference type="ChEBI" id="CHEBI:57844"/>
    </ligand>
</feature>
<feature type="binding site" evidence="1">
    <location>
        <begin position="518"/>
        <end position="519"/>
    </location>
    <ligand>
        <name>5-methyltetrahydropteroyltri-L-glutamate</name>
        <dbReference type="ChEBI" id="CHEBI:58207"/>
    </ligand>
</feature>
<feature type="binding site" evidence="1">
    <location>
        <position position="564"/>
    </location>
    <ligand>
        <name>5-methyltetrahydropteroyltri-L-glutamate</name>
        <dbReference type="ChEBI" id="CHEBI:58207"/>
    </ligand>
</feature>
<feature type="binding site" evidence="1">
    <location>
        <position position="602"/>
    </location>
    <ligand>
        <name>L-homocysteine</name>
        <dbReference type="ChEBI" id="CHEBI:58199"/>
    </ligand>
</feature>
<feature type="binding site" evidence="1">
    <location>
        <position position="602"/>
    </location>
    <ligand>
        <name>L-methionine</name>
        <dbReference type="ChEBI" id="CHEBI:57844"/>
    </ligand>
</feature>
<feature type="binding site" evidence="1">
    <location>
        <position position="608"/>
    </location>
    <ligand>
        <name>5-methyltetrahydropteroyltri-L-glutamate</name>
        <dbReference type="ChEBI" id="CHEBI:58207"/>
    </ligand>
</feature>
<feature type="binding site" evidence="1">
    <location>
        <position position="644"/>
    </location>
    <ligand>
        <name>Zn(2+)</name>
        <dbReference type="ChEBI" id="CHEBI:29105"/>
        <note>catalytic</note>
    </ligand>
</feature>
<feature type="binding site" evidence="1">
    <location>
        <position position="646"/>
    </location>
    <ligand>
        <name>Zn(2+)</name>
        <dbReference type="ChEBI" id="CHEBI:29105"/>
        <note>catalytic</note>
    </ligand>
</feature>
<feature type="binding site" evidence="1">
    <location>
        <position position="668"/>
    </location>
    <ligand>
        <name>Zn(2+)</name>
        <dbReference type="ChEBI" id="CHEBI:29105"/>
        <note>catalytic</note>
    </ligand>
</feature>
<feature type="binding site" evidence="1">
    <location>
        <position position="729"/>
    </location>
    <ligand>
        <name>Zn(2+)</name>
        <dbReference type="ChEBI" id="CHEBI:29105"/>
        <note>catalytic</note>
    </ligand>
</feature>
<protein>
    <recommendedName>
        <fullName evidence="1">5-methyltetrahydropteroyltriglutamate--homocysteine methyltransferase</fullName>
        <ecNumber evidence="1">2.1.1.14</ecNumber>
    </recommendedName>
    <alternativeName>
        <fullName evidence="1">Cobalamin-independent methionine synthase</fullName>
    </alternativeName>
    <alternativeName>
        <fullName evidence="1">Methionine synthase, vitamin-B12 independent isozyme</fullName>
    </alternativeName>
</protein>
<keyword id="KW-0028">Amino-acid biosynthesis</keyword>
<keyword id="KW-0479">Metal-binding</keyword>
<keyword id="KW-0486">Methionine biosynthesis</keyword>
<keyword id="KW-0489">Methyltransferase</keyword>
<keyword id="KW-0677">Repeat</keyword>
<keyword id="KW-0808">Transferase</keyword>
<keyword id="KW-0862">Zinc</keyword>
<reference key="1">
    <citation type="journal article" date="2004" name="Proc. Natl. Acad. Sci. U.S.A.">
        <title>Insights into the evolution of Yersinia pestis through whole-genome comparison with Yersinia pseudotuberculosis.</title>
        <authorList>
            <person name="Chain P.S.G."/>
            <person name="Carniel E."/>
            <person name="Larimer F.W."/>
            <person name="Lamerdin J."/>
            <person name="Stoutland P.O."/>
            <person name="Regala W.M."/>
            <person name="Georgescu A.M."/>
            <person name="Vergez L.M."/>
            <person name="Land M.L."/>
            <person name="Motin V.L."/>
            <person name="Brubaker R.R."/>
            <person name="Fowler J."/>
            <person name="Hinnebusch J."/>
            <person name="Marceau M."/>
            <person name="Medigue C."/>
            <person name="Simonet M."/>
            <person name="Chenal-Francisque V."/>
            <person name="Souza B."/>
            <person name="Dacheux D."/>
            <person name="Elliott J.M."/>
            <person name="Derbise A."/>
            <person name="Hauser L.J."/>
            <person name="Garcia E."/>
        </authorList>
    </citation>
    <scope>NUCLEOTIDE SEQUENCE [LARGE SCALE GENOMIC DNA]</scope>
    <source>
        <strain>IP32953</strain>
    </source>
</reference>
<gene>
    <name evidence="1" type="primary">metE</name>
    <name type="ordered locus">YPTB0248</name>
</gene>
<dbReference type="EC" id="2.1.1.14" evidence="1"/>
<dbReference type="EMBL" id="BX936398">
    <property type="protein sequence ID" value="CAH19488.1"/>
    <property type="molecule type" value="Genomic_DNA"/>
</dbReference>
<dbReference type="RefSeq" id="WP_011191538.1">
    <property type="nucleotide sequence ID" value="NC_006155.1"/>
</dbReference>
<dbReference type="SMR" id="Q66FT7"/>
<dbReference type="KEGG" id="ypo:BZ17_2335"/>
<dbReference type="KEGG" id="yps:YPTB0248"/>
<dbReference type="PATRIC" id="fig|273123.14.peg.2458"/>
<dbReference type="UniPathway" id="UPA00051">
    <property type="reaction ID" value="UER00082"/>
</dbReference>
<dbReference type="Proteomes" id="UP000001011">
    <property type="component" value="Chromosome"/>
</dbReference>
<dbReference type="GO" id="GO:0003871">
    <property type="term" value="F:5-methyltetrahydropteroyltriglutamate-homocysteine S-methyltransferase activity"/>
    <property type="evidence" value="ECO:0007669"/>
    <property type="project" value="UniProtKB-UniRule"/>
</dbReference>
<dbReference type="GO" id="GO:0008270">
    <property type="term" value="F:zinc ion binding"/>
    <property type="evidence" value="ECO:0007669"/>
    <property type="project" value="InterPro"/>
</dbReference>
<dbReference type="GO" id="GO:0009086">
    <property type="term" value="P:methionine biosynthetic process"/>
    <property type="evidence" value="ECO:0007669"/>
    <property type="project" value="UniProtKB-UniRule"/>
</dbReference>
<dbReference type="GO" id="GO:0032259">
    <property type="term" value="P:methylation"/>
    <property type="evidence" value="ECO:0007669"/>
    <property type="project" value="UniProtKB-KW"/>
</dbReference>
<dbReference type="CDD" id="cd03311">
    <property type="entry name" value="CIMS_C_terminal_like"/>
    <property type="match status" value="1"/>
</dbReference>
<dbReference type="CDD" id="cd03312">
    <property type="entry name" value="CIMS_N_terminal_like"/>
    <property type="match status" value="1"/>
</dbReference>
<dbReference type="FunFam" id="3.20.20.210:FF:000002">
    <property type="entry name" value="5-methyltetrahydropteroyltriglutamate--homocysteine methyltransferase"/>
    <property type="match status" value="1"/>
</dbReference>
<dbReference type="FunFam" id="3.20.20.210:FF:000003">
    <property type="entry name" value="5-methyltetrahydropteroyltriglutamate--homocysteine methyltransferase"/>
    <property type="match status" value="1"/>
</dbReference>
<dbReference type="Gene3D" id="3.20.20.210">
    <property type="match status" value="2"/>
</dbReference>
<dbReference type="HAMAP" id="MF_00172">
    <property type="entry name" value="Meth_synth"/>
    <property type="match status" value="1"/>
</dbReference>
<dbReference type="InterPro" id="IPR013215">
    <property type="entry name" value="Cbl-indep_Met_Synth_N"/>
</dbReference>
<dbReference type="InterPro" id="IPR006276">
    <property type="entry name" value="Cobalamin-indep_Met_synthase"/>
</dbReference>
<dbReference type="InterPro" id="IPR002629">
    <property type="entry name" value="Met_Synth_C/arc"/>
</dbReference>
<dbReference type="InterPro" id="IPR038071">
    <property type="entry name" value="UROD/MetE-like_sf"/>
</dbReference>
<dbReference type="NCBIfam" id="TIGR01371">
    <property type="entry name" value="met_syn_B12ind"/>
    <property type="match status" value="1"/>
</dbReference>
<dbReference type="NCBIfam" id="NF003556">
    <property type="entry name" value="PRK05222.1"/>
    <property type="match status" value="1"/>
</dbReference>
<dbReference type="PANTHER" id="PTHR30519">
    <property type="entry name" value="5-METHYLTETRAHYDROPTEROYLTRIGLUTAMATE--HOMOCYSTEINE METHYLTRANSFERASE"/>
    <property type="match status" value="1"/>
</dbReference>
<dbReference type="Pfam" id="PF08267">
    <property type="entry name" value="Meth_synt_1"/>
    <property type="match status" value="1"/>
</dbReference>
<dbReference type="Pfam" id="PF01717">
    <property type="entry name" value="Meth_synt_2"/>
    <property type="match status" value="1"/>
</dbReference>
<dbReference type="PIRSF" id="PIRSF000382">
    <property type="entry name" value="MeTrfase_B12_ind"/>
    <property type="match status" value="1"/>
</dbReference>
<dbReference type="SUPFAM" id="SSF51726">
    <property type="entry name" value="UROD/MetE-like"/>
    <property type="match status" value="2"/>
</dbReference>
<name>METE_YERPS</name>
<proteinExistence type="inferred from homology"/>